<gene>
    <name type="primary">mntB</name>
    <name type="ordered locus">BH1389</name>
</gene>
<organism>
    <name type="scientific">Halalkalibacterium halodurans (strain ATCC BAA-125 / DSM 18197 / FERM 7344 / JCM 9153 / C-125)</name>
    <name type="common">Bacillus halodurans</name>
    <dbReference type="NCBI Taxonomy" id="272558"/>
    <lineage>
        <taxon>Bacteria</taxon>
        <taxon>Bacillati</taxon>
        <taxon>Bacillota</taxon>
        <taxon>Bacilli</taxon>
        <taxon>Bacillales</taxon>
        <taxon>Bacillaceae</taxon>
        <taxon>Halalkalibacterium (ex Joshi et al. 2022)</taxon>
    </lineage>
</organism>
<reference key="1">
    <citation type="journal article" date="2000" name="Nucleic Acids Res.">
        <title>Complete genome sequence of the alkaliphilic bacterium Bacillus halodurans and genomic sequence comparison with Bacillus subtilis.</title>
        <authorList>
            <person name="Takami H."/>
            <person name="Nakasone K."/>
            <person name="Takaki Y."/>
            <person name="Maeno G."/>
            <person name="Sasaki R."/>
            <person name="Masui N."/>
            <person name="Fuji F."/>
            <person name="Hirama C."/>
            <person name="Nakamura Y."/>
            <person name="Ogasawara N."/>
            <person name="Kuhara S."/>
            <person name="Horikoshi K."/>
        </authorList>
    </citation>
    <scope>NUCLEOTIDE SEQUENCE [LARGE SCALE GENOMIC DNA]</scope>
    <source>
        <strain>ATCC BAA-125 / DSM 18197 / FERM 7344 / JCM 9153 / C-125</strain>
    </source>
</reference>
<accession>Q9KD30</accession>
<name>MNTB_HALH5</name>
<evidence type="ECO:0000250" key="1"/>
<evidence type="ECO:0000255" key="2">
    <source>
        <dbReference type="PROSITE-ProRule" id="PRU00434"/>
    </source>
</evidence>
<evidence type="ECO:0000305" key="3"/>
<dbReference type="EMBL" id="BA000004">
    <property type="protein sequence ID" value="BAB05108.1"/>
    <property type="molecule type" value="Genomic_DNA"/>
</dbReference>
<dbReference type="PIR" id="E83823">
    <property type="entry name" value="E83823"/>
</dbReference>
<dbReference type="RefSeq" id="WP_010897554.1">
    <property type="nucleotide sequence ID" value="NC_002570.2"/>
</dbReference>
<dbReference type="SMR" id="Q9KD30"/>
<dbReference type="STRING" id="272558.gene:10727283"/>
<dbReference type="KEGG" id="bha:BH1389"/>
<dbReference type="eggNOG" id="COG1121">
    <property type="taxonomic scope" value="Bacteria"/>
</dbReference>
<dbReference type="HOGENOM" id="CLU_000604_1_11_9"/>
<dbReference type="OrthoDB" id="9806726at2"/>
<dbReference type="Proteomes" id="UP000001258">
    <property type="component" value="Chromosome"/>
</dbReference>
<dbReference type="GO" id="GO:0005886">
    <property type="term" value="C:plasma membrane"/>
    <property type="evidence" value="ECO:0007669"/>
    <property type="project" value="UniProtKB-SubCell"/>
</dbReference>
<dbReference type="GO" id="GO:0005524">
    <property type="term" value="F:ATP binding"/>
    <property type="evidence" value="ECO:0007669"/>
    <property type="project" value="UniProtKB-KW"/>
</dbReference>
<dbReference type="GO" id="GO:0016887">
    <property type="term" value="F:ATP hydrolysis activity"/>
    <property type="evidence" value="ECO:0007669"/>
    <property type="project" value="InterPro"/>
</dbReference>
<dbReference type="CDD" id="cd03235">
    <property type="entry name" value="ABC_Metallic_Cations"/>
    <property type="match status" value="1"/>
</dbReference>
<dbReference type="FunFam" id="3.40.50.300:FF:000134">
    <property type="entry name" value="Iron-enterobactin ABC transporter ATP-binding protein"/>
    <property type="match status" value="1"/>
</dbReference>
<dbReference type="Gene3D" id="3.40.50.300">
    <property type="entry name" value="P-loop containing nucleotide triphosphate hydrolases"/>
    <property type="match status" value="1"/>
</dbReference>
<dbReference type="InterPro" id="IPR003593">
    <property type="entry name" value="AAA+_ATPase"/>
</dbReference>
<dbReference type="InterPro" id="IPR003439">
    <property type="entry name" value="ABC_transporter-like_ATP-bd"/>
</dbReference>
<dbReference type="InterPro" id="IPR017871">
    <property type="entry name" value="ABC_transporter-like_CS"/>
</dbReference>
<dbReference type="InterPro" id="IPR050153">
    <property type="entry name" value="Metal_Ion_Import_ABC"/>
</dbReference>
<dbReference type="InterPro" id="IPR027417">
    <property type="entry name" value="P-loop_NTPase"/>
</dbReference>
<dbReference type="PANTHER" id="PTHR42734:SF5">
    <property type="entry name" value="IRON TRANSPORT SYSTEM ATP-BINDING PROTEIN HI_0361-RELATED"/>
    <property type="match status" value="1"/>
</dbReference>
<dbReference type="PANTHER" id="PTHR42734">
    <property type="entry name" value="METAL TRANSPORT SYSTEM ATP-BINDING PROTEIN TM_0124-RELATED"/>
    <property type="match status" value="1"/>
</dbReference>
<dbReference type="Pfam" id="PF00005">
    <property type="entry name" value="ABC_tran"/>
    <property type="match status" value="1"/>
</dbReference>
<dbReference type="SMART" id="SM00382">
    <property type="entry name" value="AAA"/>
    <property type="match status" value="1"/>
</dbReference>
<dbReference type="SUPFAM" id="SSF52540">
    <property type="entry name" value="P-loop containing nucleoside triphosphate hydrolases"/>
    <property type="match status" value="1"/>
</dbReference>
<dbReference type="PROSITE" id="PS00211">
    <property type="entry name" value="ABC_TRANSPORTER_1"/>
    <property type="match status" value="1"/>
</dbReference>
<dbReference type="PROSITE" id="PS50893">
    <property type="entry name" value="ABC_TRANSPORTER_2"/>
    <property type="match status" value="1"/>
</dbReference>
<feature type="chain" id="PRO_0000092523" description="Manganese transport system ATP-binding protein MntB">
    <location>
        <begin position="1"/>
        <end position="250"/>
    </location>
</feature>
<feature type="domain" description="ABC transporter" evidence="2">
    <location>
        <begin position="5"/>
        <end position="236"/>
    </location>
</feature>
<feature type="binding site" evidence="2">
    <location>
        <begin position="37"/>
        <end position="44"/>
    </location>
    <ligand>
        <name>ATP</name>
        <dbReference type="ChEBI" id="CHEBI:30616"/>
    </ligand>
</feature>
<sequence>MNPVVKVDNLSVFYEQHQAIKNIRFQAGPGQMIGILGPNGAGKSTLMKAILGLERYTGTVKVLDKHVRHVRKQIAYVPQRNAIDWDFPVLVEDVVMMGRFAHIPWFKRAGKNDKRLVEESLKKVGMEEYRSRQIGELSGGQQQRVFIARALAQESELFFLDEPFVGIDVTSESIILSLLQELRDRGKTIFVVHHDLSKVEKYFDQVLMLNKELIAYGPVADVYTPEMVAKTYQGNLATFSKKDEVMVVNV</sequence>
<comment type="function">
    <text evidence="1">This protein is probably a component of a manganese permease, a binding protein-dependent, ATP-driven transport system. Probably responsible for energy coupling to the transport system (By similarity).</text>
</comment>
<comment type="subcellular location">
    <subcellularLocation>
        <location evidence="3">Cell membrane</location>
        <topology evidence="3">Peripheral membrane protein</topology>
    </subcellularLocation>
</comment>
<comment type="similarity">
    <text evidence="3">Belongs to the ABC transporter superfamily.</text>
</comment>
<keyword id="KW-0067">ATP-binding</keyword>
<keyword id="KW-1003">Cell membrane</keyword>
<keyword id="KW-0472">Membrane</keyword>
<keyword id="KW-0547">Nucleotide-binding</keyword>
<keyword id="KW-1185">Reference proteome</keyword>
<keyword id="KW-0813">Transport</keyword>
<proteinExistence type="inferred from homology"/>
<protein>
    <recommendedName>
        <fullName>Manganese transport system ATP-binding protein MntB</fullName>
    </recommendedName>
</protein>